<accession>A7H576</accession>
<sequence length="126" mass="13990">MNIALLKSKIHRASVTEARLDYVGSISIDEKLLQASGILEYEKVQVVNINNGARFETYTIATQEEGVVCLNGATARLAEVGDKVIIMSYADFNEEEAKTFKPKVVFVDENNTATKITNYEKHGSIF</sequence>
<evidence type="ECO:0000255" key="1">
    <source>
        <dbReference type="HAMAP-Rule" id="MF_00446"/>
    </source>
</evidence>
<gene>
    <name evidence="1" type="primary">panD</name>
    <name type="ordered locus">JJD26997_1668</name>
</gene>
<organism>
    <name type="scientific">Campylobacter jejuni subsp. doylei (strain ATCC BAA-1458 / RM4099 / 269.97)</name>
    <dbReference type="NCBI Taxonomy" id="360109"/>
    <lineage>
        <taxon>Bacteria</taxon>
        <taxon>Pseudomonadati</taxon>
        <taxon>Campylobacterota</taxon>
        <taxon>Epsilonproteobacteria</taxon>
        <taxon>Campylobacterales</taxon>
        <taxon>Campylobacteraceae</taxon>
        <taxon>Campylobacter</taxon>
    </lineage>
</organism>
<reference key="1">
    <citation type="submission" date="2007-07" db="EMBL/GenBank/DDBJ databases">
        <title>Complete genome sequence of Campylobacter jejuni subsp doylei 269.97 isolated from human blood.</title>
        <authorList>
            <person name="Fouts D.E."/>
            <person name="Mongodin E.F."/>
            <person name="Puiu D."/>
            <person name="Sebastian Y."/>
            <person name="Miller W.G."/>
            <person name="Mandrell R.E."/>
            <person name="Lastovica A.J."/>
            <person name="Nelson K.E."/>
        </authorList>
    </citation>
    <scope>NUCLEOTIDE SEQUENCE [LARGE SCALE GENOMIC DNA]</scope>
    <source>
        <strain>ATCC BAA-1458 / RM4099 / 269.97</strain>
    </source>
</reference>
<keyword id="KW-0068">Autocatalytic cleavage</keyword>
<keyword id="KW-0963">Cytoplasm</keyword>
<keyword id="KW-0210">Decarboxylase</keyword>
<keyword id="KW-0456">Lyase</keyword>
<keyword id="KW-0566">Pantothenate biosynthesis</keyword>
<keyword id="KW-0670">Pyruvate</keyword>
<keyword id="KW-0704">Schiff base</keyword>
<keyword id="KW-0865">Zymogen</keyword>
<comment type="function">
    <text evidence="1">Catalyzes the pyruvoyl-dependent decarboxylation of aspartate to produce beta-alanine.</text>
</comment>
<comment type="catalytic activity">
    <reaction evidence="1">
        <text>L-aspartate + H(+) = beta-alanine + CO2</text>
        <dbReference type="Rhea" id="RHEA:19497"/>
        <dbReference type="ChEBI" id="CHEBI:15378"/>
        <dbReference type="ChEBI" id="CHEBI:16526"/>
        <dbReference type="ChEBI" id="CHEBI:29991"/>
        <dbReference type="ChEBI" id="CHEBI:57966"/>
        <dbReference type="EC" id="4.1.1.11"/>
    </reaction>
</comment>
<comment type="cofactor">
    <cofactor evidence="1">
        <name>pyruvate</name>
        <dbReference type="ChEBI" id="CHEBI:15361"/>
    </cofactor>
    <text evidence="1">Binds 1 pyruvoyl group covalently per subunit.</text>
</comment>
<comment type="pathway">
    <text evidence="1">Cofactor biosynthesis; (R)-pantothenate biosynthesis; beta-alanine from L-aspartate: step 1/1.</text>
</comment>
<comment type="subunit">
    <text evidence="1">Heterooctamer of four alpha and four beta subunits.</text>
</comment>
<comment type="subcellular location">
    <subcellularLocation>
        <location evidence="1">Cytoplasm</location>
    </subcellularLocation>
</comment>
<comment type="PTM">
    <text evidence="1">Is synthesized initially as an inactive proenzyme, which is activated by self-cleavage at a specific serine bond to produce a beta-subunit with a hydroxyl group at its C-terminus and an alpha-subunit with a pyruvoyl group at its N-terminus.</text>
</comment>
<comment type="similarity">
    <text evidence="1">Belongs to the PanD family.</text>
</comment>
<feature type="chain" id="PRO_1000026169" description="Aspartate 1-decarboxylase beta chain" evidence="1">
    <location>
        <begin position="1"/>
        <end position="24"/>
    </location>
</feature>
<feature type="chain" id="PRO_0000316060" description="Aspartate 1-decarboxylase alpha chain" evidence="1">
    <location>
        <begin position="25"/>
        <end position="126"/>
    </location>
</feature>
<feature type="active site" description="Schiff-base intermediate with substrate; via pyruvic acid" evidence="1">
    <location>
        <position position="25"/>
    </location>
</feature>
<feature type="active site" description="Proton donor" evidence="1">
    <location>
        <position position="58"/>
    </location>
</feature>
<feature type="binding site" evidence="1">
    <location>
        <position position="57"/>
    </location>
    <ligand>
        <name>substrate</name>
    </ligand>
</feature>
<feature type="binding site" evidence="1">
    <location>
        <begin position="72"/>
        <end position="74"/>
    </location>
    <ligand>
        <name>substrate</name>
    </ligand>
</feature>
<feature type="modified residue" description="Pyruvic acid (Ser)" evidence="1">
    <location>
        <position position="25"/>
    </location>
</feature>
<protein>
    <recommendedName>
        <fullName evidence="1">Aspartate 1-decarboxylase</fullName>
        <ecNumber evidence="1">4.1.1.11</ecNumber>
    </recommendedName>
    <alternativeName>
        <fullName evidence="1">Aspartate alpha-decarboxylase</fullName>
    </alternativeName>
    <component>
        <recommendedName>
            <fullName evidence="1">Aspartate 1-decarboxylase beta chain</fullName>
        </recommendedName>
    </component>
    <component>
        <recommendedName>
            <fullName evidence="1">Aspartate 1-decarboxylase alpha chain</fullName>
        </recommendedName>
    </component>
</protein>
<dbReference type="EC" id="4.1.1.11" evidence="1"/>
<dbReference type="EMBL" id="CP000768">
    <property type="protein sequence ID" value="ABS44201.1"/>
    <property type="molecule type" value="Genomic_DNA"/>
</dbReference>
<dbReference type="SMR" id="A7H576"/>
<dbReference type="KEGG" id="cjd:JJD26997_1668"/>
<dbReference type="HOGENOM" id="CLU_115305_2_0_7"/>
<dbReference type="UniPathway" id="UPA00028">
    <property type="reaction ID" value="UER00002"/>
</dbReference>
<dbReference type="Proteomes" id="UP000002302">
    <property type="component" value="Chromosome"/>
</dbReference>
<dbReference type="GO" id="GO:0005829">
    <property type="term" value="C:cytosol"/>
    <property type="evidence" value="ECO:0007669"/>
    <property type="project" value="TreeGrafter"/>
</dbReference>
<dbReference type="GO" id="GO:0004068">
    <property type="term" value="F:aspartate 1-decarboxylase activity"/>
    <property type="evidence" value="ECO:0007669"/>
    <property type="project" value="UniProtKB-UniRule"/>
</dbReference>
<dbReference type="GO" id="GO:0006523">
    <property type="term" value="P:alanine biosynthetic process"/>
    <property type="evidence" value="ECO:0007669"/>
    <property type="project" value="InterPro"/>
</dbReference>
<dbReference type="GO" id="GO:0015940">
    <property type="term" value="P:pantothenate biosynthetic process"/>
    <property type="evidence" value="ECO:0007669"/>
    <property type="project" value="UniProtKB-UniRule"/>
</dbReference>
<dbReference type="CDD" id="cd06919">
    <property type="entry name" value="Asp_decarbox"/>
    <property type="match status" value="1"/>
</dbReference>
<dbReference type="Gene3D" id="2.40.40.20">
    <property type="match status" value="1"/>
</dbReference>
<dbReference type="HAMAP" id="MF_00446">
    <property type="entry name" value="PanD"/>
    <property type="match status" value="1"/>
</dbReference>
<dbReference type="InterPro" id="IPR009010">
    <property type="entry name" value="Asp_de-COase-like_dom_sf"/>
</dbReference>
<dbReference type="InterPro" id="IPR003190">
    <property type="entry name" value="Asp_decarbox"/>
</dbReference>
<dbReference type="NCBIfam" id="TIGR00223">
    <property type="entry name" value="panD"/>
    <property type="match status" value="1"/>
</dbReference>
<dbReference type="PANTHER" id="PTHR21012">
    <property type="entry name" value="ASPARTATE 1-DECARBOXYLASE"/>
    <property type="match status" value="1"/>
</dbReference>
<dbReference type="PANTHER" id="PTHR21012:SF0">
    <property type="entry name" value="ASPARTATE 1-DECARBOXYLASE"/>
    <property type="match status" value="1"/>
</dbReference>
<dbReference type="Pfam" id="PF02261">
    <property type="entry name" value="Asp_decarbox"/>
    <property type="match status" value="1"/>
</dbReference>
<dbReference type="PIRSF" id="PIRSF006246">
    <property type="entry name" value="Asp_decarbox"/>
    <property type="match status" value="1"/>
</dbReference>
<dbReference type="SUPFAM" id="SSF50692">
    <property type="entry name" value="ADC-like"/>
    <property type="match status" value="1"/>
</dbReference>
<name>PAND_CAMJD</name>
<proteinExistence type="inferred from homology"/>